<name>IHFA_PSYCK</name>
<evidence type="ECO:0000255" key="1">
    <source>
        <dbReference type="HAMAP-Rule" id="MF_00380"/>
    </source>
</evidence>
<protein>
    <recommendedName>
        <fullName evidence="1">Integration host factor subunit alpha</fullName>
        <shortName evidence="1">IHF-alpha</shortName>
    </recommendedName>
</protein>
<accession>Q1Q8C9</accession>
<sequence length="99" mass="11373">MSTLTKSDMIEHLMNHLNLTRQEGRCLVENFFDELSESLIDGKEVKLSGFGNFELKDKNSRPGRNPKTGEPVAVSARRVVTFKTGQKFRQQVDERLFDQ</sequence>
<gene>
    <name evidence="1" type="primary">ihfA</name>
    <name evidence="1" type="synonym">himA</name>
    <name type="ordered locus">Pcryo_2297</name>
</gene>
<proteinExistence type="inferred from homology"/>
<reference key="1">
    <citation type="submission" date="2006-03" db="EMBL/GenBank/DDBJ databases">
        <title>Complete sequence of chromosome of Psychrobacter cryohalolentis K5.</title>
        <authorList>
            <consortium name="US DOE Joint Genome Institute"/>
            <person name="Copeland A."/>
            <person name="Lucas S."/>
            <person name="Lapidus A."/>
            <person name="Barry K."/>
            <person name="Detter J.C."/>
            <person name="Glavina T."/>
            <person name="Hammon N."/>
            <person name="Israni S."/>
            <person name="Dalin E."/>
            <person name="Tice H."/>
            <person name="Pitluck S."/>
            <person name="Brettin T."/>
            <person name="Bruce D."/>
            <person name="Han C."/>
            <person name="Tapia R."/>
            <person name="Sims D.R."/>
            <person name="Gilna P."/>
            <person name="Schmutz J."/>
            <person name="Larimer F."/>
            <person name="Land M."/>
            <person name="Hauser L."/>
            <person name="Kyrpides N."/>
            <person name="Kim E."/>
            <person name="Richardson P."/>
        </authorList>
    </citation>
    <scope>NUCLEOTIDE SEQUENCE [LARGE SCALE GENOMIC DNA]</scope>
    <source>
        <strain>ATCC BAA-1226 / DSM 17306 / VKM B-2378 / K5</strain>
    </source>
</reference>
<feature type="chain" id="PRO_0000277763" description="Integration host factor subunit alpha">
    <location>
        <begin position="1"/>
        <end position="99"/>
    </location>
</feature>
<dbReference type="EMBL" id="CP000323">
    <property type="protein sequence ID" value="ABE76074.1"/>
    <property type="molecule type" value="Genomic_DNA"/>
</dbReference>
<dbReference type="RefSeq" id="WP_011514605.1">
    <property type="nucleotide sequence ID" value="NC_007969.1"/>
</dbReference>
<dbReference type="SMR" id="Q1Q8C9"/>
<dbReference type="STRING" id="335284.Pcryo_2297"/>
<dbReference type="KEGG" id="pcr:Pcryo_2297"/>
<dbReference type="eggNOG" id="COG0776">
    <property type="taxonomic scope" value="Bacteria"/>
</dbReference>
<dbReference type="HOGENOM" id="CLU_105066_1_3_6"/>
<dbReference type="Proteomes" id="UP000002425">
    <property type="component" value="Chromosome"/>
</dbReference>
<dbReference type="GO" id="GO:0005829">
    <property type="term" value="C:cytosol"/>
    <property type="evidence" value="ECO:0007669"/>
    <property type="project" value="TreeGrafter"/>
</dbReference>
<dbReference type="GO" id="GO:0003677">
    <property type="term" value="F:DNA binding"/>
    <property type="evidence" value="ECO:0007669"/>
    <property type="project" value="UniProtKB-UniRule"/>
</dbReference>
<dbReference type="GO" id="GO:0030527">
    <property type="term" value="F:structural constituent of chromatin"/>
    <property type="evidence" value="ECO:0007669"/>
    <property type="project" value="InterPro"/>
</dbReference>
<dbReference type="GO" id="GO:0006310">
    <property type="term" value="P:DNA recombination"/>
    <property type="evidence" value="ECO:0007669"/>
    <property type="project" value="UniProtKB-UniRule"/>
</dbReference>
<dbReference type="GO" id="GO:0009893">
    <property type="term" value="P:positive regulation of metabolic process"/>
    <property type="evidence" value="ECO:0007669"/>
    <property type="project" value="UniProtKB-ARBA"/>
</dbReference>
<dbReference type="GO" id="GO:0006355">
    <property type="term" value="P:regulation of DNA-templated transcription"/>
    <property type="evidence" value="ECO:0007669"/>
    <property type="project" value="UniProtKB-UniRule"/>
</dbReference>
<dbReference type="GO" id="GO:0006417">
    <property type="term" value="P:regulation of translation"/>
    <property type="evidence" value="ECO:0007669"/>
    <property type="project" value="UniProtKB-UniRule"/>
</dbReference>
<dbReference type="CDD" id="cd13835">
    <property type="entry name" value="IHF_A"/>
    <property type="match status" value="1"/>
</dbReference>
<dbReference type="Gene3D" id="4.10.520.10">
    <property type="entry name" value="IHF-like DNA-binding proteins"/>
    <property type="match status" value="1"/>
</dbReference>
<dbReference type="HAMAP" id="MF_00380">
    <property type="entry name" value="IHF_alpha"/>
    <property type="match status" value="1"/>
</dbReference>
<dbReference type="InterPro" id="IPR000119">
    <property type="entry name" value="Hist_DNA-bd"/>
</dbReference>
<dbReference type="InterPro" id="IPR020816">
    <property type="entry name" value="Histone-like_DNA-bd_CS"/>
</dbReference>
<dbReference type="InterPro" id="IPR010992">
    <property type="entry name" value="IHF-like_DNA-bd_dom_sf"/>
</dbReference>
<dbReference type="InterPro" id="IPR005684">
    <property type="entry name" value="IHF_alpha"/>
</dbReference>
<dbReference type="NCBIfam" id="NF001401">
    <property type="entry name" value="PRK00285.1"/>
    <property type="match status" value="1"/>
</dbReference>
<dbReference type="PANTHER" id="PTHR33175">
    <property type="entry name" value="DNA-BINDING PROTEIN HU"/>
    <property type="match status" value="1"/>
</dbReference>
<dbReference type="PANTHER" id="PTHR33175:SF2">
    <property type="entry name" value="INTEGRATION HOST FACTOR SUBUNIT ALPHA"/>
    <property type="match status" value="1"/>
</dbReference>
<dbReference type="Pfam" id="PF00216">
    <property type="entry name" value="Bac_DNA_binding"/>
    <property type="match status" value="1"/>
</dbReference>
<dbReference type="PRINTS" id="PR01727">
    <property type="entry name" value="DNABINDINGHU"/>
</dbReference>
<dbReference type="SMART" id="SM00411">
    <property type="entry name" value="BHL"/>
    <property type="match status" value="1"/>
</dbReference>
<dbReference type="SUPFAM" id="SSF47729">
    <property type="entry name" value="IHF-like DNA-binding proteins"/>
    <property type="match status" value="1"/>
</dbReference>
<dbReference type="PROSITE" id="PS00045">
    <property type="entry name" value="HISTONE_LIKE"/>
    <property type="match status" value="1"/>
</dbReference>
<organism>
    <name type="scientific">Psychrobacter cryohalolentis (strain ATCC BAA-1226 / DSM 17306 / VKM B-2378 / K5)</name>
    <dbReference type="NCBI Taxonomy" id="335284"/>
    <lineage>
        <taxon>Bacteria</taxon>
        <taxon>Pseudomonadati</taxon>
        <taxon>Pseudomonadota</taxon>
        <taxon>Gammaproteobacteria</taxon>
        <taxon>Moraxellales</taxon>
        <taxon>Moraxellaceae</taxon>
        <taxon>Psychrobacter</taxon>
    </lineage>
</organism>
<comment type="function">
    <text evidence="1">This protein is one of the two subunits of integration host factor, a specific DNA-binding protein that functions in genetic recombination as well as in transcriptional and translational control.</text>
</comment>
<comment type="subunit">
    <text evidence="1">Heterodimer of an alpha and a beta chain.</text>
</comment>
<comment type="similarity">
    <text evidence="1">Belongs to the bacterial histone-like protein family.</text>
</comment>
<keyword id="KW-0233">DNA recombination</keyword>
<keyword id="KW-0238">DNA-binding</keyword>
<keyword id="KW-0804">Transcription</keyword>
<keyword id="KW-0805">Transcription regulation</keyword>
<keyword id="KW-0810">Translation regulation</keyword>